<protein>
    <recommendedName>
        <fullName evidence="1">tRNA uridine 5-carboxymethylaminomethyl modification enzyme MnmG</fullName>
    </recommendedName>
    <alternativeName>
        <fullName evidence="1">Glucose-inhibited division protein A</fullName>
    </alternativeName>
</protein>
<proteinExistence type="inferred from homology"/>
<sequence>MDKFNVIVVGGGHAGIEASLAAAKMGKKTLLITILAEQIGAASCNPAIGGLAKGHLVKEIDALGGQMGLTTDAVGIQFRVLNESKGPAVRGSRAQIDMDRYRVYMRNLLLNTPNLEISQEIATEILSANEQITGVKTHLGNVYETTKLIITTGTFLNGLIHVGFNKLKAGRVGELSSINLSQSLRNLGLEMGRLKTGTCPRIDAKTIDFSVLERQEGDAKPAAFSFRTQHFAPEQLPCYIAYTNETTHEIIRSNFDKAPLFTGQIEGIGPRYCPSIEDKINRFGDRDRHHLFIEPQTREASEYYINGFSTSLPYDVQVAMLRSVRGFENARIVRHGYAIEYDYVVPTELKHSLETKKVRGLYLAGQINGTTGYEEAAAQGLMAGINAALNLDAKDPLVLRRDEAYIGVLIDDLVTKGTKEPYRMFTSRAEYRLLLREDNAILRLGGYGRELGLIDDETHARIEQIRVNLAKGLEILNTREFTPSKQNLEFLAGLDEDVISEKVTLQKIVARKSFTSEKLRKLDAFFENLDEASLEQILTECKYSHYIAEQKNQIDKMKDMMSVKIPENFSFRGISGLSNEVVEKLEKFAPPTLFAASEISGITPAAIDILHIYIKMSQR</sequence>
<name>MNMG_CAMC5</name>
<gene>
    <name evidence="1" type="primary">mnmG</name>
    <name evidence="1" type="synonym">gidA</name>
    <name type="ordered locus">Ccur92_03130</name>
    <name type="ORF">CCV52592_1793</name>
</gene>
<organism>
    <name type="scientific">Campylobacter curvus (strain 525.92)</name>
    <dbReference type="NCBI Taxonomy" id="360105"/>
    <lineage>
        <taxon>Bacteria</taxon>
        <taxon>Pseudomonadati</taxon>
        <taxon>Campylobacterota</taxon>
        <taxon>Epsilonproteobacteria</taxon>
        <taxon>Campylobacterales</taxon>
        <taxon>Campylobacteraceae</taxon>
        <taxon>Campylobacter</taxon>
    </lineage>
</organism>
<reference key="1">
    <citation type="submission" date="2007-07" db="EMBL/GenBank/DDBJ databases">
        <title>Genome sequence of Campylobacter curvus 525.92 isolated from human feces.</title>
        <authorList>
            <person name="Fouts D.E."/>
            <person name="Mongodin E.F."/>
            <person name="Puiu D."/>
            <person name="Sebastian Y."/>
            <person name="Miller W.G."/>
            <person name="Mandrell R.E."/>
            <person name="Lastovica A.J."/>
            <person name="Nelson K.E."/>
        </authorList>
    </citation>
    <scope>NUCLEOTIDE SEQUENCE [LARGE SCALE GENOMIC DNA]</scope>
    <source>
        <strain>525.92</strain>
    </source>
</reference>
<evidence type="ECO:0000255" key="1">
    <source>
        <dbReference type="HAMAP-Rule" id="MF_00129"/>
    </source>
</evidence>
<evidence type="ECO:0000305" key="2"/>
<keyword id="KW-0963">Cytoplasm</keyword>
<keyword id="KW-0274">FAD</keyword>
<keyword id="KW-0285">Flavoprotein</keyword>
<keyword id="KW-0520">NAD</keyword>
<keyword id="KW-1185">Reference proteome</keyword>
<keyword id="KW-0819">tRNA processing</keyword>
<dbReference type="EMBL" id="CP000767">
    <property type="protein sequence ID" value="EAT99866.1"/>
    <property type="status" value="ALT_INIT"/>
    <property type="molecule type" value="Genomic_DNA"/>
</dbReference>
<dbReference type="RefSeq" id="WP_049751862.1">
    <property type="nucleotide sequence ID" value="NC_009715.2"/>
</dbReference>
<dbReference type="SMR" id="A7GWM5"/>
<dbReference type="STRING" id="360105.CCV52592_1793"/>
<dbReference type="KEGG" id="ccv:CCV52592_1793"/>
<dbReference type="HOGENOM" id="CLU_007831_2_2_7"/>
<dbReference type="OrthoDB" id="9815560at2"/>
<dbReference type="Proteomes" id="UP000006380">
    <property type="component" value="Chromosome"/>
</dbReference>
<dbReference type="GO" id="GO:0005829">
    <property type="term" value="C:cytosol"/>
    <property type="evidence" value="ECO:0007669"/>
    <property type="project" value="TreeGrafter"/>
</dbReference>
<dbReference type="GO" id="GO:0050660">
    <property type="term" value="F:flavin adenine dinucleotide binding"/>
    <property type="evidence" value="ECO:0007669"/>
    <property type="project" value="UniProtKB-UniRule"/>
</dbReference>
<dbReference type="GO" id="GO:0030488">
    <property type="term" value="P:tRNA methylation"/>
    <property type="evidence" value="ECO:0007669"/>
    <property type="project" value="TreeGrafter"/>
</dbReference>
<dbReference type="GO" id="GO:0002098">
    <property type="term" value="P:tRNA wobble uridine modification"/>
    <property type="evidence" value="ECO:0007669"/>
    <property type="project" value="InterPro"/>
</dbReference>
<dbReference type="FunFam" id="1.10.150.570:FF:000001">
    <property type="entry name" value="tRNA uridine 5-carboxymethylaminomethyl modification enzyme MnmG"/>
    <property type="match status" value="1"/>
</dbReference>
<dbReference type="FunFam" id="3.50.50.60:FF:000002">
    <property type="entry name" value="tRNA uridine 5-carboxymethylaminomethyl modification enzyme MnmG"/>
    <property type="match status" value="1"/>
</dbReference>
<dbReference type="Gene3D" id="3.50.50.60">
    <property type="entry name" value="FAD/NAD(P)-binding domain"/>
    <property type="match status" value="2"/>
</dbReference>
<dbReference type="Gene3D" id="1.10.150.570">
    <property type="entry name" value="GidA associated domain, C-terminal subdomain"/>
    <property type="match status" value="1"/>
</dbReference>
<dbReference type="Gene3D" id="1.10.10.1800">
    <property type="entry name" value="tRNA uridine 5-carboxymethylaminomethyl modification enzyme MnmG/GidA"/>
    <property type="match status" value="1"/>
</dbReference>
<dbReference type="HAMAP" id="MF_00129">
    <property type="entry name" value="MnmG_GidA"/>
    <property type="match status" value="1"/>
</dbReference>
<dbReference type="InterPro" id="IPR036188">
    <property type="entry name" value="FAD/NAD-bd_sf"/>
</dbReference>
<dbReference type="InterPro" id="IPR049312">
    <property type="entry name" value="GIDA_C_N"/>
</dbReference>
<dbReference type="InterPro" id="IPR004416">
    <property type="entry name" value="MnmG"/>
</dbReference>
<dbReference type="InterPro" id="IPR002218">
    <property type="entry name" value="MnmG-rel"/>
</dbReference>
<dbReference type="InterPro" id="IPR020595">
    <property type="entry name" value="MnmG-rel_CS"/>
</dbReference>
<dbReference type="InterPro" id="IPR026904">
    <property type="entry name" value="MnmG_C"/>
</dbReference>
<dbReference type="InterPro" id="IPR047001">
    <property type="entry name" value="MnmG_C_subdom"/>
</dbReference>
<dbReference type="InterPro" id="IPR044920">
    <property type="entry name" value="MnmG_C_subdom_sf"/>
</dbReference>
<dbReference type="InterPro" id="IPR040131">
    <property type="entry name" value="MnmG_N"/>
</dbReference>
<dbReference type="NCBIfam" id="TIGR00136">
    <property type="entry name" value="mnmG_gidA"/>
    <property type="match status" value="1"/>
</dbReference>
<dbReference type="PANTHER" id="PTHR11806">
    <property type="entry name" value="GLUCOSE INHIBITED DIVISION PROTEIN A"/>
    <property type="match status" value="1"/>
</dbReference>
<dbReference type="PANTHER" id="PTHR11806:SF0">
    <property type="entry name" value="PROTEIN MTO1 HOMOLOG, MITOCHONDRIAL"/>
    <property type="match status" value="1"/>
</dbReference>
<dbReference type="Pfam" id="PF01134">
    <property type="entry name" value="GIDA"/>
    <property type="match status" value="1"/>
</dbReference>
<dbReference type="Pfam" id="PF21680">
    <property type="entry name" value="GIDA_C_1st"/>
    <property type="match status" value="1"/>
</dbReference>
<dbReference type="Pfam" id="PF13932">
    <property type="entry name" value="SAM_GIDA_C"/>
    <property type="match status" value="1"/>
</dbReference>
<dbReference type="PRINTS" id="PR00411">
    <property type="entry name" value="PNDRDTASEI"/>
</dbReference>
<dbReference type="SMART" id="SM01228">
    <property type="entry name" value="GIDA_assoc_3"/>
    <property type="match status" value="1"/>
</dbReference>
<dbReference type="SUPFAM" id="SSF51905">
    <property type="entry name" value="FAD/NAD(P)-binding domain"/>
    <property type="match status" value="1"/>
</dbReference>
<dbReference type="PROSITE" id="PS01280">
    <property type="entry name" value="GIDA_1"/>
    <property type="match status" value="1"/>
</dbReference>
<dbReference type="PROSITE" id="PS01281">
    <property type="entry name" value="GIDA_2"/>
    <property type="match status" value="1"/>
</dbReference>
<comment type="function">
    <text evidence="1">NAD-binding protein involved in the addition of a carboxymethylaminomethyl (cmnm) group at the wobble position (U34) of certain tRNAs, forming tRNA-cmnm(5)s(2)U34.</text>
</comment>
<comment type="cofactor">
    <cofactor evidence="1">
        <name>FAD</name>
        <dbReference type="ChEBI" id="CHEBI:57692"/>
    </cofactor>
</comment>
<comment type="subunit">
    <text evidence="1">Homodimer. Heterotetramer of two MnmE and two MnmG subunits.</text>
</comment>
<comment type="subcellular location">
    <subcellularLocation>
        <location evidence="1">Cytoplasm</location>
    </subcellularLocation>
</comment>
<comment type="similarity">
    <text evidence="1">Belongs to the MnmG family.</text>
</comment>
<comment type="sequence caution" evidence="2">
    <conflict type="erroneous initiation">
        <sequence resource="EMBL-CDS" id="EAT99866"/>
    </conflict>
</comment>
<feature type="chain" id="PRO_0000345248" description="tRNA uridine 5-carboxymethylaminomethyl modification enzyme MnmG">
    <location>
        <begin position="1"/>
        <end position="619"/>
    </location>
</feature>
<feature type="binding site" evidence="1">
    <location>
        <begin position="10"/>
        <end position="15"/>
    </location>
    <ligand>
        <name>FAD</name>
        <dbReference type="ChEBI" id="CHEBI:57692"/>
    </ligand>
</feature>
<feature type="binding site" evidence="1">
    <location>
        <begin position="269"/>
        <end position="283"/>
    </location>
    <ligand>
        <name>NAD(+)</name>
        <dbReference type="ChEBI" id="CHEBI:57540"/>
    </ligand>
</feature>
<accession>A7GWM5</accession>